<feature type="chain" id="PRO_1000056832" description="Nucleotide-binding protein llmg_1557">
    <location>
        <begin position="1"/>
        <end position="295"/>
    </location>
</feature>
<feature type="binding site" evidence="1">
    <location>
        <begin position="12"/>
        <end position="19"/>
    </location>
    <ligand>
        <name>ATP</name>
        <dbReference type="ChEBI" id="CHEBI:30616"/>
    </ligand>
</feature>
<feature type="binding site" evidence="1">
    <location>
        <begin position="63"/>
        <end position="66"/>
    </location>
    <ligand>
        <name>GTP</name>
        <dbReference type="ChEBI" id="CHEBI:37565"/>
    </ligand>
</feature>
<gene>
    <name type="ordered locus">llmg_1557</name>
</gene>
<evidence type="ECO:0000255" key="1">
    <source>
        <dbReference type="HAMAP-Rule" id="MF_00636"/>
    </source>
</evidence>
<accession>A2RLG5</accession>
<reference key="1">
    <citation type="journal article" date="2007" name="J. Bacteriol.">
        <title>The complete genome sequence of the lactic acid bacterial paradigm Lactococcus lactis subsp. cremoris MG1363.</title>
        <authorList>
            <person name="Wegmann U."/>
            <person name="O'Connell-Motherway M."/>
            <person name="Zomer A."/>
            <person name="Buist G."/>
            <person name="Shearman C."/>
            <person name="Canchaya C."/>
            <person name="Ventura M."/>
            <person name="Goesmann A."/>
            <person name="Gasson M.J."/>
            <person name="Kuipers O.P."/>
            <person name="van Sinderen D."/>
            <person name="Kok J."/>
        </authorList>
    </citation>
    <scope>NUCLEOTIDE SEQUENCE [LARGE SCALE GENOMIC DNA]</scope>
    <source>
        <strain>MG1363</strain>
    </source>
</reference>
<comment type="function">
    <text evidence="1">Displays ATPase and GTPase activities.</text>
</comment>
<comment type="similarity">
    <text evidence="1">Belongs to the RapZ-like family.</text>
</comment>
<sequence length="295" mass="33644">MDNKLNIVIITGMSGAGKTVAIQSFEDMGYFTVDNIPPNLIEKFVGLLNTPDNKIDKVALVVDMRSRAFFEDIQSIVTELTDNTSVNFKLLFLDANDTELVSRYKETRRSHPLAIDGRTLDGITKEREILADLKNLSEVVIDTSELTPRNLRARILQKFATSTESTFRIEVMSFGFKYGLPLDADLVFDVRFLPNPHYISELRDKNGTDQEVYDYVMEHPQSEEFYQNLMKMLVPILPAYKKEGKSVLTIAFGCTGGQHRSVAFAERVSAALREKWHLNVSHRDKDRRKETVNRS</sequence>
<dbReference type="EMBL" id="AM406671">
    <property type="protein sequence ID" value="CAL98132.1"/>
    <property type="molecule type" value="Genomic_DNA"/>
</dbReference>
<dbReference type="RefSeq" id="WP_011835395.1">
    <property type="nucleotide sequence ID" value="NC_009004.1"/>
</dbReference>
<dbReference type="SMR" id="A2RLG5"/>
<dbReference type="STRING" id="416870.llmg_1557"/>
<dbReference type="KEGG" id="llm:llmg_1557"/>
<dbReference type="eggNOG" id="COG1660">
    <property type="taxonomic scope" value="Bacteria"/>
</dbReference>
<dbReference type="HOGENOM" id="CLU_059558_0_0_9"/>
<dbReference type="OrthoDB" id="9784461at2"/>
<dbReference type="PhylomeDB" id="A2RLG5"/>
<dbReference type="Proteomes" id="UP000000364">
    <property type="component" value="Chromosome"/>
</dbReference>
<dbReference type="GO" id="GO:0005524">
    <property type="term" value="F:ATP binding"/>
    <property type="evidence" value="ECO:0007669"/>
    <property type="project" value="UniProtKB-UniRule"/>
</dbReference>
<dbReference type="GO" id="GO:0005525">
    <property type="term" value="F:GTP binding"/>
    <property type="evidence" value="ECO:0007669"/>
    <property type="project" value="UniProtKB-UniRule"/>
</dbReference>
<dbReference type="Gene3D" id="3.40.50.300">
    <property type="entry name" value="P-loop containing nucleotide triphosphate hydrolases"/>
    <property type="match status" value="1"/>
</dbReference>
<dbReference type="HAMAP" id="MF_00636">
    <property type="entry name" value="RapZ_like"/>
    <property type="match status" value="1"/>
</dbReference>
<dbReference type="InterPro" id="IPR027417">
    <property type="entry name" value="P-loop_NTPase"/>
</dbReference>
<dbReference type="InterPro" id="IPR005337">
    <property type="entry name" value="RapZ-like"/>
</dbReference>
<dbReference type="InterPro" id="IPR053930">
    <property type="entry name" value="RapZ-like_N"/>
</dbReference>
<dbReference type="InterPro" id="IPR053931">
    <property type="entry name" value="RapZ_C"/>
</dbReference>
<dbReference type="NCBIfam" id="NF003828">
    <property type="entry name" value="PRK05416.1"/>
    <property type="match status" value="1"/>
</dbReference>
<dbReference type="PANTHER" id="PTHR30448">
    <property type="entry name" value="RNASE ADAPTER PROTEIN RAPZ"/>
    <property type="match status" value="1"/>
</dbReference>
<dbReference type="PANTHER" id="PTHR30448:SF0">
    <property type="entry name" value="RNASE ADAPTER PROTEIN RAPZ"/>
    <property type="match status" value="1"/>
</dbReference>
<dbReference type="Pfam" id="PF22740">
    <property type="entry name" value="PapZ_C"/>
    <property type="match status" value="1"/>
</dbReference>
<dbReference type="Pfam" id="PF03668">
    <property type="entry name" value="RapZ-like_N"/>
    <property type="match status" value="1"/>
</dbReference>
<dbReference type="PIRSF" id="PIRSF005052">
    <property type="entry name" value="P-loopkin"/>
    <property type="match status" value="1"/>
</dbReference>
<dbReference type="SUPFAM" id="SSF52540">
    <property type="entry name" value="P-loop containing nucleoside triphosphate hydrolases"/>
    <property type="match status" value="1"/>
</dbReference>
<protein>
    <recommendedName>
        <fullName evidence="1">Nucleotide-binding protein llmg_1557</fullName>
    </recommendedName>
</protein>
<keyword id="KW-0067">ATP-binding</keyword>
<keyword id="KW-0342">GTP-binding</keyword>
<keyword id="KW-0547">Nucleotide-binding</keyword>
<name>Y1557_LACLM</name>
<proteinExistence type="inferred from homology"/>
<organism>
    <name type="scientific">Lactococcus lactis subsp. cremoris (strain MG1363)</name>
    <dbReference type="NCBI Taxonomy" id="416870"/>
    <lineage>
        <taxon>Bacteria</taxon>
        <taxon>Bacillati</taxon>
        <taxon>Bacillota</taxon>
        <taxon>Bacilli</taxon>
        <taxon>Lactobacillales</taxon>
        <taxon>Streptococcaceae</taxon>
        <taxon>Lactococcus</taxon>
        <taxon>Lactococcus cremoris subsp. cremoris</taxon>
    </lineage>
</organism>